<organism>
    <name type="scientific">Photobacterium profundum (strain SS9)</name>
    <dbReference type="NCBI Taxonomy" id="298386"/>
    <lineage>
        <taxon>Bacteria</taxon>
        <taxon>Pseudomonadati</taxon>
        <taxon>Pseudomonadota</taxon>
        <taxon>Gammaproteobacteria</taxon>
        <taxon>Vibrionales</taxon>
        <taxon>Vibrionaceae</taxon>
        <taxon>Photobacterium</taxon>
    </lineage>
</organism>
<proteinExistence type="inferred from homology"/>
<dbReference type="EC" id="1.8.4.8" evidence="1"/>
<dbReference type="EMBL" id="CR378673">
    <property type="protein sequence ID" value="CAG21617.1"/>
    <property type="molecule type" value="Genomic_DNA"/>
</dbReference>
<dbReference type="RefSeq" id="WP_011219866.1">
    <property type="nucleotide sequence ID" value="NC_006370.1"/>
</dbReference>
<dbReference type="SMR" id="Q6LM60"/>
<dbReference type="STRING" id="298386.PBPRA3319"/>
<dbReference type="KEGG" id="ppr:PBPRA3319"/>
<dbReference type="eggNOG" id="COG0175">
    <property type="taxonomic scope" value="Bacteria"/>
</dbReference>
<dbReference type="HOGENOM" id="CLU_044089_3_0_6"/>
<dbReference type="UniPathway" id="UPA00140">
    <property type="reaction ID" value="UER00206"/>
</dbReference>
<dbReference type="Proteomes" id="UP000000593">
    <property type="component" value="Chromosome 1"/>
</dbReference>
<dbReference type="GO" id="GO:0005737">
    <property type="term" value="C:cytoplasm"/>
    <property type="evidence" value="ECO:0007669"/>
    <property type="project" value="UniProtKB-SubCell"/>
</dbReference>
<dbReference type="GO" id="GO:0004604">
    <property type="term" value="F:phosphoadenylyl-sulfate reductase (thioredoxin) activity"/>
    <property type="evidence" value="ECO:0007669"/>
    <property type="project" value="UniProtKB-UniRule"/>
</dbReference>
<dbReference type="GO" id="GO:0070814">
    <property type="term" value="P:hydrogen sulfide biosynthetic process"/>
    <property type="evidence" value="ECO:0007669"/>
    <property type="project" value="UniProtKB-UniRule"/>
</dbReference>
<dbReference type="GO" id="GO:0019379">
    <property type="term" value="P:sulfate assimilation, phosphoadenylyl sulfate reduction by phosphoadenylyl-sulfate reductase (thioredoxin)"/>
    <property type="evidence" value="ECO:0007669"/>
    <property type="project" value="UniProtKB-UniRule"/>
</dbReference>
<dbReference type="CDD" id="cd23945">
    <property type="entry name" value="PAPS_reductase"/>
    <property type="match status" value="1"/>
</dbReference>
<dbReference type="FunFam" id="3.40.50.620:FF:000043">
    <property type="entry name" value="Phosphoadenosine phosphosulfate reductase"/>
    <property type="match status" value="1"/>
</dbReference>
<dbReference type="Gene3D" id="3.40.50.620">
    <property type="entry name" value="HUPs"/>
    <property type="match status" value="1"/>
</dbReference>
<dbReference type="HAMAP" id="MF_00063">
    <property type="entry name" value="CysH"/>
    <property type="match status" value="1"/>
</dbReference>
<dbReference type="InterPro" id="IPR004511">
    <property type="entry name" value="PAPS/APS_Rdtase"/>
</dbReference>
<dbReference type="InterPro" id="IPR002500">
    <property type="entry name" value="PAPS_reduct_dom"/>
</dbReference>
<dbReference type="InterPro" id="IPR011800">
    <property type="entry name" value="PAPS_reductase_CysH"/>
</dbReference>
<dbReference type="InterPro" id="IPR014729">
    <property type="entry name" value="Rossmann-like_a/b/a_fold"/>
</dbReference>
<dbReference type="NCBIfam" id="TIGR00434">
    <property type="entry name" value="cysH"/>
    <property type="match status" value="1"/>
</dbReference>
<dbReference type="NCBIfam" id="TIGR02057">
    <property type="entry name" value="PAPS_reductase"/>
    <property type="match status" value="1"/>
</dbReference>
<dbReference type="NCBIfam" id="NF002537">
    <property type="entry name" value="PRK02090.1"/>
    <property type="match status" value="1"/>
</dbReference>
<dbReference type="PANTHER" id="PTHR46509">
    <property type="entry name" value="PHOSPHOADENOSINE PHOSPHOSULFATE REDUCTASE"/>
    <property type="match status" value="1"/>
</dbReference>
<dbReference type="PANTHER" id="PTHR46509:SF1">
    <property type="entry name" value="PHOSPHOADENOSINE PHOSPHOSULFATE REDUCTASE"/>
    <property type="match status" value="1"/>
</dbReference>
<dbReference type="Pfam" id="PF01507">
    <property type="entry name" value="PAPS_reduct"/>
    <property type="match status" value="1"/>
</dbReference>
<dbReference type="PIRSF" id="PIRSF000857">
    <property type="entry name" value="PAPS_reductase"/>
    <property type="match status" value="1"/>
</dbReference>
<dbReference type="SUPFAM" id="SSF52402">
    <property type="entry name" value="Adenine nucleotide alpha hydrolases-like"/>
    <property type="match status" value="1"/>
</dbReference>
<protein>
    <recommendedName>
        <fullName evidence="1">Phosphoadenosine 5'-phosphosulfate reductase</fullName>
        <shortName evidence="1">PAPS reductase</shortName>
        <ecNumber evidence="1">1.8.4.8</ecNumber>
    </recommendedName>
    <alternativeName>
        <fullName evidence="1">3'-phosphoadenylylsulfate reductase</fullName>
    </alternativeName>
    <alternativeName>
        <fullName evidence="1">PAPS reductase, thioredoxin dependent</fullName>
    </alternativeName>
    <alternativeName>
        <fullName evidence="1">PAPS sulfotransferase</fullName>
    </alternativeName>
    <alternativeName>
        <fullName evidence="1">PAdoPS reductase</fullName>
    </alternativeName>
</protein>
<reference key="1">
    <citation type="journal article" date="2005" name="Science">
        <title>Life at depth: Photobacterium profundum genome sequence and expression analysis.</title>
        <authorList>
            <person name="Vezzi A."/>
            <person name="Campanaro S."/>
            <person name="D'Angelo M."/>
            <person name="Simonato F."/>
            <person name="Vitulo N."/>
            <person name="Lauro F.M."/>
            <person name="Cestaro A."/>
            <person name="Malacrida G."/>
            <person name="Simionati B."/>
            <person name="Cannata N."/>
            <person name="Romualdi C."/>
            <person name="Bartlett D.H."/>
            <person name="Valle G."/>
        </authorList>
    </citation>
    <scope>NUCLEOTIDE SEQUENCE [LARGE SCALE GENOMIC DNA]</scope>
    <source>
        <strain>ATCC BAA-1253 / SS9</strain>
    </source>
</reference>
<sequence length="253" mass="28904">MPNYALADLLEKTKIEQILQLAEINAELEALSAQERVRWALANLGSEFALASSFGIQSAVMLHLVTNESPKVPVILTDTGYLFPETYQFIDQLTLRLSLNLYVYRAEISSAWQEARHGKLWEQGVDGIKQYNRLNKVEPMRRALDELNVSAWFSGLRREQSSSRASLPVLAIQNGVFKFLPLIDWTDNDIEQYLNQYDLPYHPLRDEGYLSMGDTHTTKKWEPGMTEEETRFFGLKRECGLHEEDAESDGSGI</sequence>
<accession>Q6LM60</accession>
<evidence type="ECO:0000255" key="1">
    <source>
        <dbReference type="HAMAP-Rule" id="MF_00063"/>
    </source>
</evidence>
<name>CYSH_PHOPR</name>
<gene>
    <name evidence="1" type="primary">cysH</name>
    <name type="ordered locus">PBPRA3319</name>
</gene>
<feature type="chain" id="PRO_1000008932" description="Phosphoadenosine 5'-phosphosulfate reductase">
    <location>
        <begin position="1"/>
        <end position="253"/>
    </location>
</feature>
<feature type="active site" description="Nucleophile; cysteine thiosulfonate intermediate" evidence="1">
    <location>
        <position position="239"/>
    </location>
</feature>
<comment type="function">
    <text evidence="1">Catalyzes the formation of sulfite from phosphoadenosine 5'-phosphosulfate (PAPS) using thioredoxin as an electron donor.</text>
</comment>
<comment type="catalytic activity">
    <reaction evidence="1">
        <text>[thioredoxin]-disulfide + sulfite + adenosine 3',5'-bisphosphate + 2 H(+) = [thioredoxin]-dithiol + 3'-phosphoadenylyl sulfate</text>
        <dbReference type="Rhea" id="RHEA:11724"/>
        <dbReference type="Rhea" id="RHEA-COMP:10698"/>
        <dbReference type="Rhea" id="RHEA-COMP:10700"/>
        <dbReference type="ChEBI" id="CHEBI:15378"/>
        <dbReference type="ChEBI" id="CHEBI:17359"/>
        <dbReference type="ChEBI" id="CHEBI:29950"/>
        <dbReference type="ChEBI" id="CHEBI:50058"/>
        <dbReference type="ChEBI" id="CHEBI:58339"/>
        <dbReference type="ChEBI" id="CHEBI:58343"/>
        <dbReference type="EC" id="1.8.4.8"/>
    </reaction>
</comment>
<comment type="pathway">
    <text evidence="1">Sulfur metabolism; hydrogen sulfide biosynthesis; sulfite from sulfate: step 3/3.</text>
</comment>
<comment type="subcellular location">
    <subcellularLocation>
        <location evidence="1">Cytoplasm</location>
    </subcellularLocation>
</comment>
<comment type="similarity">
    <text evidence="1">Belongs to the PAPS reductase family. CysH subfamily.</text>
</comment>
<keyword id="KW-0963">Cytoplasm</keyword>
<keyword id="KW-0560">Oxidoreductase</keyword>
<keyword id="KW-1185">Reference proteome</keyword>